<reference key="1">
    <citation type="journal article" date="2003" name="Proc. Natl. Acad. Sci. U.S.A.">
        <title>The complete genome sequence of Chromobacterium violaceum reveals remarkable and exploitable bacterial adaptability.</title>
        <authorList>
            <person name="Vasconcelos A.T.R."/>
            <person name="de Almeida D.F."/>
            <person name="Hungria M."/>
            <person name="Guimaraes C.T."/>
            <person name="Antonio R.V."/>
            <person name="Almeida F.C."/>
            <person name="de Almeida L.G.P."/>
            <person name="de Almeida R."/>
            <person name="Alves-Gomes J.A."/>
            <person name="Andrade E.M."/>
            <person name="Araripe J."/>
            <person name="de Araujo M.F.F."/>
            <person name="Astolfi-Filho S."/>
            <person name="Azevedo V."/>
            <person name="Baptista A.J."/>
            <person name="Bataus L.A.M."/>
            <person name="Batista J.S."/>
            <person name="Belo A."/>
            <person name="van den Berg C."/>
            <person name="Bogo M."/>
            <person name="Bonatto S."/>
            <person name="Bordignon J."/>
            <person name="Brigido M.M."/>
            <person name="Brito C.A."/>
            <person name="Brocchi M."/>
            <person name="Burity H.A."/>
            <person name="Camargo A.A."/>
            <person name="Cardoso D.D.P."/>
            <person name="Carneiro N.P."/>
            <person name="Carraro D.M."/>
            <person name="Carvalho C.M.B."/>
            <person name="Cascardo J.C.M."/>
            <person name="Cavada B.S."/>
            <person name="Chueire L.M.O."/>
            <person name="Creczynski-Pasa T.B."/>
            <person name="Cunha-Junior N.C."/>
            <person name="Fagundes N."/>
            <person name="Falcao C.L."/>
            <person name="Fantinatti F."/>
            <person name="Farias I.P."/>
            <person name="Felipe M.S.S."/>
            <person name="Ferrari L.P."/>
            <person name="Ferro J.A."/>
            <person name="Ferro M.I.T."/>
            <person name="Franco G.R."/>
            <person name="Freitas N.S.A."/>
            <person name="Furlan L.R."/>
            <person name="Gazzinelli R.T."/>
            <person name="Gomes E.A."/>
            <person name="Goncalves P.R."/>
            <person name="Grangeiro T.B."/>
            <person name="Grattapaglia D."/>
            <person name="Grisard E.C."/>
            <person name="Hanna E.S."/>
            <person name="Jardim S.N."/>
            <person name="Laurino J."/>
            <person name="Leoi L.C.T."/>
            <person name="Lima L.F.A."/>
            <person name="Loureiro M.F."/>
            <person name="Lyra M.C.C.P."/>
            <person name="Madeira H.M.F."/>
            <person name="Manfio G.P."/>
            <person name="Maranhao A.Q."/>
            <person name="Martins W.S."/>
            <person name="di Mauro S.M.Z."/>
            <person name="de Medeiros S.R.B."/>
            <person name="Meissner R.V."/>
            <person name="Moreira M.A.M."/>
            <person name="Nascimento F.F."/>
            <person name="Nicolas M.F."/>
            <person name="Oliveira J.G."/>
            <person name="Oliveira S.C."/>
            <person name="Paixao R.F.C."/>
            <person name="Parente J.A."/>
            <person name="Pedrosa F.O."/>
            <person name="Pena S.D.J."/>
            <person name="Pereira J.O."/>
            <person name="Pereira M."/>
            <person name="Pinto L.S.R.C."/>
            <person name="Pinto L.S."/>
            <person name="Porto J.I.R."/>
            <person name="Potrich D.P."/>
            <person name="Ramalho-Neto C.E."/>
            <person name="Reis A.M.M."/>
            <person name="Rigo L.U."/>
            <person name="Rondinelli E."/>
            <person name="Santos E.B.P."/>
            <person name="Santos F.R."/>
            <person name="Schneider M.P.C."/>
            <person name="Seuanez H.N."/>
            <person name="Silva A.M.R."/>
            <person name="da Silva A.L.C."/>
            <person name="Silva D.W."/>
            <person name="Silva R."/>
            <person name="Simoes I.C."/>
            <person name="Simon D."/>
            <person name="Soares C.M.A."/>
            <person name="Soares R.B.A."/>
            <person name="Souza E.M."/>
            <person name="Souza K.R.L."/>
            <person name="Souza R.C."/>
            <person name="Steffens M.B.R."/>
            <person name="Steindel M."/>
            <person name="Teixeira S.R."/>
            <person name="Urmenyi T."/>
            <person name="Vettore A."/>
            <person name="Wassem R."/>
            <person name="Zaha A."/>
            <person name="Simpson A.J.G."/>
        </authorList>
    </citation>
    <scope>NUCLEOTIDE SEQUENCE [LARGE SCALE GENOMIC DNA]</scope>
    <source>
        <strain>ATCC 12472 / DSM 30191 / JCM 1249 / CCUG 213 / NBRC 12614 / NCIMB 9131 / NCTC 9757 / MK</strain>
    </source>
</reference>
<evidence type="ECO:0000255" key="1">
    <source>
        <dbReference type="HAMAP-Rule" id="MF_01030"/>
    </source>
</evidence>
<feature type="chain" id="PRO_0000185610" description="Probable D-serine dehydratase">
    <location>
        <begin position="1"/>
        <end position="448"/>
    </location>
</feature>
<feature type="modified residue" description="N6-(pyridoxal phosphate)lysine" evidence="1">
    <location>
        <position position="119"/>
    </location>
</feature>
<organism>
    <name type="scientific">Chromobacterium violaceum (strain ATCC 12472 / DSM 30191 / JCM 1249 / CCUG 213 / NBRC 12614 / NCIMB 9131 / NCTC 9757 / MK)</name>
    <dbReference type="NCBI Taxonomy" id="243365"/>
    <lineage>
        <taxon>Bacteria</taxon>
        <taxon>Pseudomonadati</taxon>
        <taxon>Pseudomonadota</taxon>
        <taxon>Betaproteobacteria</taxon>
        <taxon>Neisseriales</taxon>
        <taxon>Chromobacteriaceae</taxon>
        <taxon>Chromobacterium</taxon>
    </lineage>
</organism>
<protein>
    <recommendedName>
        <fullName evidence="1">Probable D-serine dehydratase</fullName>
        <ecNumber evidence="1">4.3.1.18</ecNumber>
    </recommendedName>
    <alternativeName>
        <fullName evidence="1">D-serine deaminase</fullName>
        <shortName evidence="1">DSD</shortName>
    </alternativeName>
</protein>
<keyword id="KW-0456">Lyase</keyword>
<keyword id="KW-0663">Pyridoxal phosphate</keyword>
<keyword id="KW-1185">Reference proteome</keyword>
<name>SDHD_CHRVO</name>
<proteinExistence type="inferred from homology"/>
<dbReference type="EC" id="4.3.1.18" evidence="1"/>
<dbReference type="EMBL" id="AE016825">
    <property type="protein sequence ID" value="AAQ60318.1"/>
    <property type="molecule type" value="Genomic_DNA"/>
</dbReference>
<dbReference type="RefSeq" id="WP_011136195.1">
    <property type="nucleotide sequence ID" value="NC_005085.1"/>
</dbReference>
<dbReference type="SMR" id="Q7NUP9"/>
<dbReference type="STRING" id="243365.CV_2648"/>
<dbReference type="KEGG" id="cvi:CV_2648"/>
<dbReference type="eggNOG" id="COG3048">
    <property type="taxonomic scope" value="Bacteria"/>
</dbReference>
<dbReference type="HOGENOM" id="CLU_035707_0_0_4"/>
<dbReference type="OrthoDB" id="9780546at2"/>
<dbReference type="Proteomes" id="UP000001424">
    <property type="component" value="Chromosome"/>
</dbReference>
<dbReference type="GO" id="GO:0008721">
    <property type="term" value="F:D-serine ammonia-lyase activity"/>
    <property type="evidence" value="ECO:0007669"/>
    <property type="project" value="UniProtKB-EC"/>
</dbReference>
<dbReference type="GO" id="GO:0016836">
    <property type="term" value="F:hydro-lyase activity"/>
    <property type="evidence" value="ECO:0007669"/>
    <property type="project" value="UniProtKB-UniRule"/>
</dbReference>
<dbReference type="GO" id="GO:0030170">
    <property type="term" value="F:pyridoxal phosphate binding"/>
    <property type="evidence" value="ECO:0007669"/>
    <property type="project" value="InterPro"/>
</dbReference>
<dbReference type="GO" id="GO:0036088">
    <property type="term" value="P:D-serine catabolic process"/>
    <property type="evidence" value="ECO:0007669"/>
    <property type="project" value="TreeGrafter"/>
</dbReference>
<dbReference type="GO" id="GO:0009097">
    <property type="term" value="P:isoleucine biosynthetic process"/>
    <property type="evidence" value="ECO:0007669"/>
    <property type="project" value="TreeGrafter"/>
</dbReference>
<dbReference type="CDD" id="cd06447">
    <property type="entry name" value="D-Ser-dehyd"/>
    <property type="match status" value="1"/>
</dbReference>
<dbReference type="Gene3D" id="3.40.50.1100">
    <property type="match status" value="2"/>
</dbReference>
<dbReference type="HAMAP" id="MF_01030">
    <property type="entry name" value="D_Ser_dehydrat"/>
    <property type="match status" value="1"/>
</dbReference>
<dbReference type="InterPro" id="IPR011780">
    <property type="entry name" value="D_Ser_am_lyase"/>
</dbReference>
<dbReference type="InterPro" id="IPR050147">
    <property type="entry name" value="Ser/Thr_Dehydratase"/>
</dbReference>
<dbReference type="InterPro" id="IPR000634">
    <property type="entry name" value="Ser/Thr_deHydtase_PyrdxlP-BS"/>
</dbReference>
<dbReference type="InterPro" id="IPR001926">
    <property type="entry name" value="TrpB-like_PALP"/>
</dbReference>
<dbReference type="InterPro" id="IPR036052">
    <property type="entry name" value="TrpB-like_PALP_sf"/>
</dbReference>
<dbReference type="NCBIfam" id="TIGR02035">
    <property type="entry name" value="D_Ser_am_lyase"/>
    <property type="match status" value="1"/>
</dbReference>
<dbReference type="NCBIfam" id="NF002823">
    <property type="entry name" value="PRK02991.1"/>
    <property type="match status" value="1"/>
</dbReference>
<dbReference type="PANTHER" id="PTHR48078:SF9">
    <property type="entry name" value="D-SERINE DEHYDRATASE"/>
    <property type="match status" value="1"/>
</dbReference>
<dbReference type="PANTHER" id="PTHR48078">
    <property type="entry name" value="THREONINE DEHYDRATASE, MITOCHONDRIAL-RELATED"/>
    <property type="match status" value="1"/>
</dbReference>
<dbReference type="Pfam" id="PF00291">
    <property type="entry name" value="PALP"/>
    <property type="match status" value="1"/>
</dbReference>
<dbReference type="SUPFAM" id="SSF53686">
    <property type="entry name" value="Tryptophan synthase beta subunit-like PLP-dependent enzymes"/>
    <property type="match status" value="1"/>
</dbReference>
<dbReference type="PROSITE" id="PS00165">
    <property type="entry name" value="DEHYDRATASE_SER_THR"/>
    <property type="match status" value="1"/>
</dbReference>
<gene>
    <name evidence="1" type="primary">dsdA</name>
    <name type="ordered locus">CV_2648</name>
</gene>
<comment type="catalytic activity">
    <reaction evidence="1">
        <text>D-serine = pyruvate + NH4(+)</text>
        <dbReference type="Rhea" id="RHEA:13977"/>
        <dbReference type="ChEBI" id="CHEBI:15361"/>
        <dbReference type="ChEBI" id="CHEBI:28938"/>
        <dbReference type="ChEBI" id="CHEBI:35247"/>
        <dbReference type="EC" id="4.3.1.18"/>
    </reaction>
</comment>
<comment type="cofactor">
    <cofactor evidence="1">
        <name>pyridoxal 5'-phosphate</name>
        <dbReference type="ChEBI" id="CHEBI:597326"/>
    </cofactor>
</comment>
<comment type="similarity">
    <text evidence="1">Belongs to the serine/threonine dehydratase family. DsdA subfamily.</text>
</comment>
<sequence>MIHGKTLAEWQQSHPEIRELTGLRECAWFNPAAAPAAEALPDVGLGAADIADASARLRRFAPYISRAFPETAASGGIIESPLLPVPAFQQALARRRGRELPGRLWLKADSHLPISGSIKARGGIYEVLKHAEDLALANGLLQPGDDYARLASPEARSLFSRHGIAVGSTGNLGLSIGIMAAKLGFQAAVHMSADARQWKKDKLRAHGVTVVEYQTDYSAAVARGREQAARDPDCHFVDDENSIHLFLGYAVAAERLKAQLAEAGVRVDADHPLFVYLPCGVGGGPGGVAFGLKQAFGDAVHCLFAEPTRSPCMLLGVLTGLHDKVSVQDFGIDNRTVADGLAVGRPSGFVGRAMQRLIDGYYTVDDDELFRLLAMLEQTEGLRLEPSALAGAPGIARVLEENQGYRQRMGLDADRLACATHLIWATGGSMVPEAEMDGYLRRGRALLG</sequence>
<accession>Q7NUP9</accession>